<proteinExistence type="inferred from homology"/>
<comment type="catalytic activity">
    <reaction evidence="1">
        <text>urea + 2 H2O + H(+) = hydrogencarbonate + 2 NH4(+)</text>
        <dbReference type="Rhea" id="RHEA:20557"/>
        <dbReference type="ChEBI" id="CHEBI:15377"/>
        <dbReference type="ChEBI" id="CHEBI:15378"/>
        <dbReference type="ChEBI" id="CHEBI:16199"/>
        <dbReference type="ChEBI" id="CHEBI:17544"/>
        <dbReference type="ChEBI" id="CHEBI:28938"/>
        <dbReference type="EC" id="3.5.1.5"/>
    </reaction>
</comment>
<comment type="pathway">
    <text evidence="1">Nitrogen metabolism; urea degradation; CO(2) and NH(3) from urea (urease route): step 1/1.</text>
</comment>
<comment type="subunit">
    <text evidence="1">Heterotrimer of UreA (gamma), UreB (beta) and UreC (alpha) subunits. Three heterotrimers associate to form the active enzyme.</text>
</comment>
<comment type="subcellular location">
    <subcellularLocation>
        <location evidence="1">Cytoplasm</location>
    </subcellularLocation>
</comment>
<comment type="similarity">
    <text evidence="1">Belongs to the urease beta subunit family.</text>
</comment>
<protein>
    <recommendedName>
        <fullName evidence="1">Urease subunit beta</fullName>
        <ecNumber evidence="1">3.5.1.5</ecNumber>
    </recommendedName>
    <alternativeName>
        <fullName evidence="1">Urea amidohydrolase subunit beta</fullName>
    </alternativeName>
</protein>
<evidence type="ECO:0000255" key="1">
    <source>
        <dbReference type="HAMAP-Rule" id="MF_01954"/>
    </source>
</evidence>
<gene>
    <name evidence="1" type="primary">ureB</name>
    <name type="ordered locus">Syncc9902_2256</name>
</gene>
<reference key="1">
    <citation type="submission" date="2005-08" db="EMBL/GenBank/DDBJ databases">
        <title>Complete sequence of Synechococcus sp. CC9902.</title>
        <authorList>
            <person name="Copeland A."/>
            <person name="Lucas S."/>
            <person name="Lapidus A."/>
            <person name="Barry K."/>
            <person name="Detter J.C."/>
            <person name="Glavina T."/>
            <person name="Hammon N."/>
            <person name="Israni S."/>
            <person name="Pitluck S."/>
            <person name="Martinez M."/>
            <person name="Schmutz J."/>
            <person name="Larimer F."/>
            <person name="Land M."/>
            <person name="Kyrpides N."/>
            <person name="Ivanova N."/>
            <person name="Richardson P."/>
        </authorList>
    </citation>
    <scope>NUCLEOTIDE SEQUENCE [LARGE SCALE GENOMIC DNA]</scope>
    <source>
        <strain>CC9902</strain>
    </source>
</reference>
<accession>Q3AVR2</accession>
<keyword id="KW-0963">Cytoplasm</keyword>
<keyword id="KW-0378">Hydrolase</keyword>
<keyword id="KW-1185">Reference proteome</keyword>
<name>URE2_SYNS9</name>
<organism>
    <name type="scientific">Synechococcus sp. (strain CC9902)</name>
    <dbReference type="NCBI Taxonomy" id="316279"/>
    <lineage>
        <taxon>Bacteria</taxon>
        <taxon>Bacillati</taxon>
        <taxon>Cyanobacteriota</taxon>
        <taxon>Cyanophyceae</taxon>
        <taxon>Synechococcales</taxon>
        <taxon>Synechococcaceae</taxon>
        <taxon>Synechococcus</taxon>
    </lineage>
</organism>
<sequence length="106" mass="11312">MAPLIPGELIPEPGELELNAGRPVTTISVANGGDRPVQVGSHFHFAEANAALQFDRDAARGQRLDIPAGTAIRFEPGDHRDVNLIPFAGHRRVIGFNGRINGPIDA</sequence>
<feature type="chain" id="PRO_0000239903" description="Urease subunit beta">
    <location>
        <begin position="1"/>
        <end position="106"/>
    </location>
</feature>
<dbReference type="EC" id="3.5.1.5" evidence="1"/>
<dbReference type="EMBL" id="CP000097">
    <property type="protein sequence ID" value="ABB27214.1"/>
    <property type="molecule type" value="Genomic_DNA"/>
</dbReference>
<dbReference type="RefSeq" id="WP_011360990.1">
    <property type="nucleotide sequence ID" value="NC_007513.1"/>
</dbReference>
<dbReference type="SMR" id="Q3AVR2"/>
<dbReference type="STRING" id="316279.Syncc9902_2256"/>
<dbReference type="KEGG" id="sye:Syncc9902_2256"/>
<dbReference type="eggNOG" id="COG0832">
    <property type="taxonomic scope" value="Bacteria"/>
</dbReference>
<dbReference type="HOGENOM" id="CLU_129707_1_1_3"/>
<dbReference type="OrthoDB" id="9797217at2"/>
<dbReference type="UniPathway" id="UPA00258">
    <property type="reaction ID" value="UER00370"/>
</dbReference>
<dbReference type="Proteomes" id="UP000002712">
    <property type="component" value="Chromosome"/>
</dbReference>
<dbReference type="GO" id="GO:0035550">
    <property type="term" value="C:urease complex"/>
    <property type="evidence" value="ECO:0007669"/>
    <property type="project" value="InterPro"/>
</dbReference>
<dbReference type="GO" id="GO:0009039">
    <property type="term" value="F:urease activity"/>
    <property type="evidence" value="ECO:0007669"/>
    <property type="project" value="UniProtKB-UniRule"/>
</dbReference>
<dbReference type="GO" id="GO:0043419">
    <property type="term" value="P:urea catabolic process"/>
    <property type="evidence" value="ECO:0007669"/>
    <property type="project" value="UniProtKB-UniRule"/>
</dbReference>
<dbReference type="CDD" id="cd00407">
    <property type="entry name" value="Urease_beta"/>
    <property type="match status" value="1"/>
</dbReference>
<dbReference type="FunFam" id="2.10.150.10:FF:000001">
    <property type="entry name" value="Urease subunit beta"/>
    <property type="match status" value="1"/>
</dbReference>
<dbReference type="Gene3D" id="2.10.150.10">
    <property type="entry name" value="Urease, beta subunit"/>
    <property type="match status" value="1"/>
</dbReference>
<dbReference type="HAMAP" id="MF_01954">
    <property type="entry name" value="Urease_beta"/>
    <property type="match status" value="1"/>
</dbReference>
<dbReference type="InterPro" id="IPR002019">
    <property type="entry name" value="Urease_beta-like"/>
</dbReference>
<dbReference type="InterPro" id="IPR036461">
    <property type="entry name" value="Urease_betasu_sf"/>
</dbReference>
<dbReference type="InterPro" id="IPR050069">
    <property type="entry name" value="Urease_subunit"/>
</dbReference>
<dbReference type="NCBIfam" id="NF009682">
    <property type="entry name" value="PRK13203.1"/>
    <property type="match status" value="1"/>
</dbReference>
<dbReference type="NCBIfam" id="TIGR00192">
    <property type="entry name" value="urease_beta"/>
    <property type="match status" value="1"/>
</dbReference>
<dbReference type="PANTHER" id="PTHR33569">
    <property type="entry name" value="UREASE"/>
    <property type="match status" value="1"/>
</dbReference>
<dbReference type="PANTHER" id="PTHR33569:SF1">
    <property type="entry name" value="UREASE"/>
    <property type="match status" value="1"/>
</dbReference>
<dbReference type="Pfam" id="PF00699">
    <property type="entry name" value="Urease_beta"/>
    <property type="match status" value="1"/>
</dbReference>
<dbReference type="SUPFAM" id="SSF51278">
    <property type="entry name" value="Urease, beta-subunit"/>
    <property type="match status" value="1"/>
</dbReference>